<protein>
    <recommendedName>
        <fullName evidence="10">U3 small nucleolar RNA-associated protein 25 homolog</fullName>
    </recommendedName>
    <alternativeName>
        <fullName>Digestive organ expansion factor homolog</fullName>
    </alternativeName>
    <alternativeName>
        <fullName evidence="11">UTP25 small subunit processor component</fullName>
    </alternativeName>
</protein>
<accession>Q68CQ4</accession>
<accession>O75992</accession>
<accession>Q4VY00</accession>
<accession>Q63HL9</accession>
<proteinExistence type="evidence at protein level"/>
<dbReference type="EMBL" id="CR749825">
    <property type="protein sequence ID" value="CAH18684.1"/>
    <property type="molecule type" value="mRNA"/>
</dbReference>
<dbReference type="EMBL" id="BX648514">
    <property type="protein sequence ID" value="CAH56170.1"/>
    <property type="molecule type" value="mRNA"/>
</dbReference>
<dbReference type="EMBL" id="AL022398">
    <property type="status" value="NOT_ANNOTATED_CDS"/>
    <property type="molecule type" value="Genomic_DNA"/>
</dbReference>
<dbReference type="EMBL" id="BC022964">
    <property type="protein sequence ID" value="AAH22964.1"/>
    <property type="molecule type" value="mRNA"/>
</dbReference>
<dbReference type="CCDS" id="CCDS1493.1"/>
<dbReference type="RefSeq" id="NP_055203.4">
    <property type="nucleotide sequence ID" value="NM_014388.6"/>
</dbReference>
<dbReference type="BioGRID" id="117972">
    <property type="interactions" value="114"/>
</dbReference>
<dbReference type="FunCoup" id="Q68CQ4">
    <property type="interactions" value="3494"/>
</dbReference>
<dbReference type="IntAct" id="Q68CQ4">
    <property type="interactions" value="52"/>
</dbReference>
<dbReference type="MINT" id="Q68CQ4"/>
<dbReference type="STRING" id="9606.ENSP00000419005"/>
<dbReference type="GlyGen" id="Q68CQ4">
    <property type="glycosylation" value="1 site, 1 O-linked glycan (1 site)"/>
</dbReference>
<dbReference type="iPTMnet" id="Q68CQ4"/>
<dbReference type="PhosphoSitePlus" id="Q68CQ4"/>
<dbReference type="SwissPalm" id="Q68CQ4"/>
<dbReference type="BioMuta" id="DIEXF"/>
<dbReference type="DMDM" id="117949399"/>
<dbReference type="jPOST" id="Q68CQ4"/>
<dbReference type="MassIVE" id="Q68CQ4"/>
<dbReference type="PaxDb" id="9606-ENSP00000419005"/>
<dbReference type="PeptideAtlas" id="Q68CQ4"/>
<dbReference type="ProteomicsDB" id="66020"/>
<dbReference type="Pumba" id="Q68CQ4"/>
<dbReference type="Antibodypedia" id="20703">
    <property type="antibodies" value="78 antibodies from 20 providers"/>
</dbReference>
<dbReference type="DNASU" id="27042"/>
<dbReference type="Ensembl" id="ENST00000491415.7">
    <property type="protein sequence ID" value="ENSP00000419005.1"/>
    <property type="gene ID" value="ENSG00000117597.18"/>
</dbReference>
<dbReference type="GeneID" id="27042"/>
<dbReference type="KEGG" id="hsa:27042"/>
<dbReference type="MANE-Select" id="ENST00000491415.7">
    <property type="protein sequence ID" value="ENSP00000419005.1"/>
    <property type="RefSeq nucleotide sequence ID" value="NM_014388.7"/>
    <property type="RefSeq protein sequence ID" value="NP_055203.4"/>
</dbReference>
<dbReference type="UCSC" id="uc001hhr.3">
    <property type="organism name" value="human"/>
</dbReference>
<dbReference type="AGR" id="HGNC:28440"/>
<dbReference type="CTD" id="27042"/>
<dbReference type="DisGeNET" id="27042"/>
<dbReference type="GeneCards" id="UTP25"/>
<dbReference type="HGNC" id="HGNC:28440">
    <property type="gene designation" value="UTP25"/>
</dbReference>
<dbReference type="HPA" id="ENSG00000117597">
    <property type="expression patterns" value="Low tissue specificity"/>
</dbReference>
<dbReference type="MIM" id="619663">
    <property type="type" value="gene"/>
</dbReference>
<dbReference type="neXtProt" id="NX_Q68CQ4"/>
<dbReference type="OpenTargets" id="ENSG00000117597"/>
<dbReference type="PharmGKB" id="PA142672491"/>
<dbReference type="VEuPathDB" id="HostDB:ENSG00000117597"/>
<dbReference type="eggNOG" id="KOG2340">
    <property type="taxonomic scope" value="Eukaryota"/>
</dbReference>
<dbReference type="GeneTree" id="ENSGT00390000000709"/>
<dbReference type="HOGENOM" id="CLU_018705_1_1_1"/>
<dbReference type="InParanoid" id="Q68CQ4"/>
<dbReference type="OMA" id="QDRGDTF"/>
<dbReference type="OrthoDB" id="10264378at2759"/>
<dbReference type="PAN-GO" id="Q68CQ4">
    <property type="GO annotations" value="5 GO annotations based on evolutionary models"/>
</dbReference>
<dbReference type="PhylomeDB" id="Q68CQ4"/>
<dbReference type="TreeFam" id="TF105930"/>
<dbReference type="PathwayCommons" id="Q68CQ4"/>
<dbReference type="Reactome" id="R-HSA-6790901">
    <property type="pathway name" value="rRNA modification in the nucleus and cytosol"/>
</dbReference>
<dbReference type="Reactome" id="R-HSA-6791226">
    <property type="pathway name" value="Major pathway of rRNA processing in the nucleolus and cytosol"/>
</dbReference>
<dbReference type="SignaLink" id="Q68CQ4"/>
<dbReference type="BioGRID-ORCS" id="27042">
    <property type="hits" value="677 hits in 1151 CRISPR screens"/>
</dbReference>
<dbReference type="CD-CODE" id="91857CE7">
    <property type="entry name" value="Nucleolus"/>
</dbReference>
<dbReference type="ChiTaRS" id="DIEXF">
    <property type="organism name" value="human"/>
</dbReference>
<dbReference type="GenomeRNAi" id="27042"/>
<dbReference type="Pharos" id="Q68CQ4">
    <property type="development level" value="Tbio"/>
</dbReference>
<dbReference type="PRO" id="PR:Q68CQ4"/>
<dbReference type="Proteomes" id="UP000005640">
    <property type="component" value="Chromosome 1"/>
</dbReference>
<dbReference type="RNAct" id="Q68CQ4">
    <property type="molecule type" value="protein"/>
</dbReference>
<dbReference type="Bgee" id="ENSG00000117597">
    <property type="expression patterns" value="Expressed in endothelial cell and 210 other cell types or tissues"/>
</dbReference>
<dbReference type="ExpressionAtlas" id="Q68CQ4">
    <property type="expression patterns" value="baseline and differential"/>
</dbReference>
<dbReference type="GO" id="GO:0005730">
    <property type="term" value="C:nucleolus"/>
    <property type="evidence" value="ECO:0000314"/>
    <property type="project" value="UniProtKB"/>
</dbReference>
<dbReference type="GO" id="GO:0005654">
    <property type="term" value="C:nucleoplasm"/>
    <property type="evidence" value="ECO:0000304"/>
    <property type="project" value="Reactome"/>
</dbReference>
<dbReference type="GO" id="GO:0032040">
    <property type="term" value="C:small-subunit processome"/>
    <property type="evidence" value="ECO:0000318"/>
    <property type="project" value="GO_Central"/>
</dbReference>
<dbReference type="GO" id="GO:0003723">
    <property type="term" value="F:RNA binding"/>
    <property type="evidence" value="ECO:0007005"/>
    <property type="project" value="UniProtKB"/>
</dbReference>
<dbReference type="GO" id="GO:0019843">
    <property type="term" value="F:rRNA binding"/>
    <property type="evidence" value="ECO:0000318"/>
    <property type="project" value="GO_Central"/>
</dbReference>
<dbReference type="GO" id="GO:0034511">
    <property type="term" value="F:U3 snoRNA binding"/>
    <property type="evidence" value="ECO:0000318"/>
    <property type="project" value="GO_Central"/>
</dbReference>
<dbReference type="GO" id="GO:0048568">
    <property type="term" value="P:embryonic organ development"/>
    <property type="evidence" value="ECO:0000315"/>
    <property type="project" value="UniProtKB"/>
</dbReference>
<dbReference type="GO" id="GO:0000462">
    <property type="term" value="P:maturation of SSU-rRNA from tricistronic rRNA transcript (SSU-rRNA, 5.8S rRNA, LSU-rRNA)"/>
    <property type="evidence" value="ECO:0000318"/>
    <property type="project" value="GO_Central"/>
</dbReference>
<dbReference type="GO" id="GO:0040019">
    <property type="term" value="P:positive regulation of embryonic development"/>
    <property type="evidence" value="ECO:0000250"/>
    <property type="project" value="UniProtKB"/>
</dbReference>
<dbReference type="GO" id="GO:0030163">
    <property type="term" value="P:protein catabolic process"/>
    <property type="evidence" value="ECO:0000315"/>
    <property type="project" value="UniProtKB"/>
</dbReference>
<dbReference type="GO" id="GO:0031648">
    <property type="term" value="P:protein destabilization"/>
    <property type="evidence" value="ECO:0000315"/>
    <property type="project" value="UniProtKB"/>
</dbReference>
<dbReference type="GO" id="GO:1902570">
    <property type="term" value="P:protein localization to nucleolus"/>
    <property type="evidence" value="ECO:0000314"/>
    <property type="project" value="UniProtKB"/>
</dbReference>
<dbReference type="FunFam" id="3.40.50.300:FF:000962">
    <property type="entry name" value="digestive organ expansion factor homolog"/>
    <property type="match status" value="1"/>
</dbReference>
<dbReference type="Gene3D" id="3.40.50.300">
    <property type="entry name" value="P-loop containing nucleotide triphosphate hydrolases"/>
    <property type="match status" value="1"/>
</dbReference>
<dbReference type="InterPro" id="IPR027417">
    <property type="entry name" value="P-loop_NTPase"/>
</dbReference>
<dbReference type="InterPro" id="IPR010678">
    <property type="entry name" value="UTP25"/>
</dbReference>
<dbReference type="InterPro" id="IPR053939">
    <property type="entry name" value="UTP25_C"/>
</dbReference>
<dbReference type="InterPro" id="IPR053940">
    <property type="entry name" value="UTP25_NTPase-like"/>
</dbReference>
<dbReference type="PANTHER" id="PTHR12933">
    <property type="entry name" value="ORF PROTEIN-RELATED"/>
    <property type="match status" value="1"/>
</dbReference>
<dbReference type="PANTHER" id="PTHR12933:SF0">
    <property type="entry name" value="U3 SMALL NUCLEOLAR RNA-ASSOCIATED PROTEIN 25 HOMOLOG"/>
    <property type="match status" value="1"/>
</dbReference>
<dbReference type="Pfam" id="PF06862">
    <property type="entry name" value="Utp25_C"/>
    <property type="match status" value="1"/>
</dbReference>
<dbReference type="Pfam" id="PF22916">
    <property type="entry name" value="UTP25_NTPase-like"/>
    <property type="match status" value="1"/>
</dbReference>
<dbReference type="SUPFAM" id="SSF52540">
    <property type="entry name" value="P-loop containing nucleoside triphosphate hydrolases"/>
    <property type="match status" value="1"/>
</dbReference>
<feature type="chain" id="PRO_0000254149" description="U3 small nucleolar RNA-associated protein 25 homolog">
    <location>
        <begin position="1"/>
        <end position="756"/>
    </location>
</feature>
<feature type="region of interest" description="Promotes p53/TP53 degradation" evidence="1">
    <location>
        <begin position="1"/>
        <end position="185"/>
    </location>
</feature>
<feature type="region of interest" description="Disordered" evidence="2">
    <location>
        <begin position="1"/>
        <end position="159"/>
    </location>
</feature>
<feature type="region of interest" description="Promotes p53/TP53 degradation" evidence="1">
    <location>
        <begin position="573"/>
        <end position="635"/>
    </location>
</feature>
<feature type="region of interest" description="Represses p53/TP53 degradation" evidence="1">
    <location>
        <begin position="636"/>
        <end position="697"/>
    </location>
</feature>
<feature type="compositionally biased region" description="Basic and acidic residues" evidence="2">
    <location>
        <begin position="25"/>
        <end position="43"/>
    </location>
</feature>
<feature type="compositionally biased region" description="Acidic residues" evidence="2">
    <location>
        <begin position="54"/>
        <end position="64"/>
    </location>
</feature>
<feature type="compositionally biased region" description="Acidic residues" evidence="2">
    <location>
        <begin position="84"/>
        <end position="121"/>
    </location>
</feature>
<feature type="modified residue" description="Phosphoserine" evidence="12">
    <location>
        <position position="10"/>
    </location>
</feature>
<feature type="modified residue" description="Phosphoserine" evidence="7">
    <location>
        <position position="50"/>
    </location>
</feature>
<feature type="modified residue" description="Phosphoserine" evidence="1">
    <location>
        <position position="52"/>
    </location>
</feature>
<feature type="modified residue" description="Phosphoserine" evidence="7">
    <location>
        <position position="58"/>
    </location>
</feature>
<feature type="modified residue" description="Phosphoserine" evidence="1">
    <location>
        <position position="60"/>
    </location>
</feature>
<feature type="modified residue" description="Phosphoserine" evidence="7">
    <location>
        <position position="62"/>
    </location>
</feature>
<feature type="modified residue" description="Phosphoserine" evidence="1">
    <location>
        <position position="64"/>
    </location>
</feature>
<feature type="sequence variant" id="VAR_028827" description="Decreases degradation of p53/TP53; dbSNP:rs585627." evidence="3 5">
    <original>Q</original>
    <variation>E</variation>
    <location>
        <position position="67"/>
    </location>
</feature>
<feature type="sequence variant" id="VAR_084648" description="Decreases degradation of p53/TP53; dbSNP:rs61747285." evidence="3 5">
    <original>G</original>
    <variation>D</variation>
    <location>
        <position position="111"/>
    </location>
</feature>
<feature type="sequence conflict" description="In Ref. 1; CAH56170." evidence="10" ref="1">
    <original>T</original>
    <variation>A</variation>
    <location>
        <position position="258"/>
    </location>
</feature>
<gene>
    <name evidence="11" type="primary">UTP25</name>
    <name type="synonym">C1orf107</name>
    <name evidence="8" type="synonym">DEF</name>
    <name evidence="9" type="synonym">DIEXF</name>
</gene>
<keyword id="KW-0217">Developmental protein</keyword>
<keyword id="KW-0539">Nucleus</keyword>
<keyword id="KW-0597">Phosphoprotein</keyword>
<keyword id="KW-1267">Proteomics identification</keyword>
<keyword id="KW-1185">Reference proteome</keyword>
<evidence type="ECO:0000250" key="1">
    <source>
        <dbReference type="UniProtKB" id="Q6PEH4"/>
    </source>
</evidence>
<evidence type="ECO:0000256" key="2">
    <source>
        <dbReference type="SAM" id="MobiDB-lite"/>
    </source>
</evidence>
<evidence type="ECO:0000269" key="3">
    <source>
    </source>
</evidence>
<evidence type="ECO:0000269" key="4">
    <source>
    </source>
</evidence>
<evidence type="ECO:0000269" key="5">
    <source>
    </source>
</evidence>
<evidence type="ECO:0000269" key="6">
    <source>
    </source>
</evidence>
<evidence type="ECO:0000269" key="7">
    <source>
    </source>
</evidence>
<evidence type="ECO:0000303" key="8">
    <source>
    </source>
</evidence>
<evidence type="ECO:0000303" key="9">
    <source>
    </source>
</evidence>
<evidence type="ECO:0000305" key="10"/>
<evidence type="ECO:0000312" key="11">
    <source>
        <dbReference type="HGNC" id="HGNC:28440"/>
    </source>
</evidence>
<evidence type="ECO:0007744" key="12">
    <source>
    </source>
</evidence>
<reference key="1">
    <citation type="journal article" date="2007" name="BMC Genomics">
        <title>The full-ORF clone resource of the German cDNA consortium.</title>
        <authorList>
            <person name="Bechtel S."/>
            <person name="Rosenfelder H."/>
            <person name="Duda A."/>
            <person name="Schmidt C.P."/>
            <person name="Ernst U."/>
            <person name="Wellenreuther R."/>
            <person name="Mehrle A."/>
            <person name="Schuster C."/>
            <person name="Bahr A."/>
            <person name="Bloecker H."/>
            <person name="Heubner D."/>
            <person name="Hoerlein A."/>
            <person name="Michel G."/>
            <person name="Wedler H."/>
            <person name="Koehrer K."/>
            <person name="Ottenwaelder B."/>
            <person name="Poustka A."/>
            <person name="Wiemann S."/>
            <person name="Schupp I."/>
        </authorList>
    </citation>
    <scope>NUCLEOTIDE SEQUENCE [LARGE SCALE MRNA]</scope>
    <scope>VARIANTS GLU-67 AND ASP-111</scope>
    <source>
        <tissue>Endometrial adenocarcinoma</tissue>
        <tissue>Fetal kidney</tissue>
    </source>
</reference>
<reference key="2">
    <citation type="journal article" date="2006" name="Nature">
        <title>The DNA sequence and biological annotation of human chromosome 1.</title>
        <authorList>
            <person name="Gregory S.G."/>
            <person name="Barlow K.F."/>
            <person name="McLay K.E."/>
            <person name="Kaul R."/>
            <person name="Swarbreck D."/>
            <person name="Dunham A."/>
            <person name="Scott C.E."/>
            <person name="Howe K.L."/>
            <person name="Woodfine K."/>
            <person name="Spencer C.C.A."/>
            <person name="Jones M.C."/>
            <person name="Gillson C."/>
            <person name="Searle S."/>
            <person name="Zhou Y."/>
            <person name="Kokocinski F."/>
            <person name="McDonald L."/>
            <person name="Evans R."/>
            <person name="Phillips K."/>
            <person name="Atkinson A."/>
            <person name="Cooper R."/>
            <person name="Jones C."/>
            <person name="Hall R.E."/>
            <person name="Andrews T.D."/>
            <person name="Lloyd C."/>
            <person name="Ainscough R."/>
            <person name="Almeida J.P."/>
            <person name="Ambrose K.D."/>
            <person name="Anderson F."/>
            <person name="Andrew R.W."/>
            <person name="Ashwell R.I.S."/>
            <person name="Aubin K."/>
            <person name="Babbage A.K."/>
            <person name="Bagguley C.L."/>
            <person name="Bailey J."/>
            <person name="Beasley H."/>
            <person name="Bethel G."/>
            <person name="Bird C.P."/>
            <person name="Bray-Allen S."/>
            <person name="Brown J.Y."/>
            <person name="Brown A.J."/>
            <person name="Buckley D."/>
            <person name="Burton J."/>
            <person name="Bye J."/>
            <person name="Carder C."/>
            <person name="Chapman J.C."/>
            <person name="Clark S.Y."/>
            <person name="Clarke G."/>
            <person name="Clee C."/>
            <person name="Cobley V."/>
            <person name="Collier R.E."/>
            <person name="Corby N."/>
            <person name="Coville G.J."/>
            <person name="Davies J."/>
            <person name="Deadman R."/>
            <person name="Dunn M."/>
            <person name="Earthrowl M."/>
            <person name="Ellington A.G."/>
            <person name="Errington H."/>
            <person name="Frankish A."/>
            <person name="Frankland J."/>
            <person name="French L."/>
            <person name="Garner P."/>
            <person name="Garnett J."/>
            <person name="Gay L."/>
            <person name="Ghori M.R.J."/>
            <person name="Gibson R."/>
            <person name="Gilby L.M."/>
            <person name="Gillett W."/>
            <person name="Glithero R.J."/>
            <person name="Grafham D.V."/>
            <person name="Griffiths C."/>
            <person name="Griffiths-Jones S."/>
            <person name="Grocock R."/>
            <person name="Hammond S."/>
            <person name="Harrison E.S.I."/>
            <person name="Hart E."/>
            <person name="Haugen E."/>
            <person name="Heath P.D."/>
            <person name="Holmes S."/>
            <person name="Holt K."/>
            <person name="Howden P.J."/>
            <person name="Hunt A.R."/>
            <person name="Hunt S.E."/>
            <person name="Hunter G."/>
            <person name="Isherwood J."/>
            <person name="James R."/>
            <person name="Johnson C."/>
            <person name="Johnson D."/>
            <person name="Joy A."/>
            <person name="Kay M."/>
            <person name="Kershaw J.K."/>
            <person name="Kibukawa M."/>
            <person name="Kimberley A.M."/>
            <person name="King A."/>
            <person name="Knights A.J."/>
            <person name="Lad H."/>
            <person name="Laird G."/>
            <person name="Lawlor S."/>
            <person name="Leongamornlert D.A."/>
            <person name="Lloyd D.M."/>
            <person name="Loveland J."/>
            <person name="Lovell J."/>
            <person name="Lush M.J."/>
            <person name="Lyne R."/>
            <person name="Martin S."/>
            <person name="Mashreghi-Mohammadi M."/>
            <person name="Matthews L."/>
            <person name="Matthews N.S.W."/>
            <person name="McLaren S."/>
            <person name="Milne S."/>
            <person name="Mistry S."/>
            <person name="Moore M.J.F."/>
            <person name="Nickerson T."/>
            <person name="O'Dell C.N."/>
            <person name="Oliver K."/>
            <person name="Palmeiri A."/>
            <person name="Palmer S.A."/>
            <person name="Parker A."/>
            <person name="Patel D."/>
            <person name="Pearce A.V."/>
            <person name="Peck A.I."/>
            <person name="Pelan S."/>
            <person name="Phelps K."/>
            <person name="Phillimore B.J."/>
            <person name="Plumb R."/>
            <person name="Rajan J."/>
            <person name="Raymond C."/>
            <person name="Rouse G."/>
            <person name="Saenphimmachak C."/>
            <person name="Sehra H.K."/>
            <person name="Sheridan E."/>
            <person name="Shownkeen R."/>
            <person name="Sims S."/>
            <person name="Skuce C.D."/>
            <person name="Smith M."/>
            <person name="Steward C."/>
            <person name="Subramanian S."/>
            <person name="Sycamore N."/>
            <person name="Tracey A."/>
            <person name="Tromans A."/>
            <person name="Van Helmond Z."/>
            <person name="Wall M."/>
            <person name="Wallis J.M."/>
            <person name="White S."/>
            <person name="Whitehead S.L."/>
            <person name="Wilkinson J.E."/>
            <person name="Willey D.L."/>
            <person name="Williams H."/>
            <person name="Wilming L."/>
            <person name="Wray P.W."/>
            <person name="Wu Z."/>
            <person name="Coulson A."/>
            <person name="Vaudin M."/>
            <person name="Sulston J.E."/>
            <person name="Durbin R.M."/>
            <person name="Hubbard T."/>
            <person name="Wooster R."/>
            <person name="Dunham I."/>
            <person name="Carter N.P."/>
            <person name="McVean G."/>
            <person name="Ross M.T."/>
            <person name="Harrow J."/>
            <person name="Olson M.V."/>
            <person name="Beck S."/>
            <person name="Rogers J."/>
            <person name="Bentley D.R."/>
        </authorList>
    </citation>
    <scope>NUCLEOTIDE SEQUENCE [LARGE SCALE GENOMIC DNA]</scope>
</reference>
<reference key="3">
    <citation type="journal article" date="2004" name="Genome Res.">
        <title>The status, quality, and expansion of the NIH full-length cDNA project: the Mammalian Gene Collection (MGC).</title>
        <authorList>
            <consortium name="The MGC Project Team"/>
        </authorList>
    </citation>
    <scope>NUCLEOTIDE SEQUENCE [LARGE SCALE MRNA]</scope>
    <source>
        <tissue>Cervix</tissue>
    </source>
</reference>
<reference key="4">
    <citation type="journal article" date="2009" name="Anal. Chem.">
        <title>Lys-N and trypsin cover complementary parts of the phosphoproteome in a refined SCX-based approach.</title>
        <authorList>
            <person name="Gauci S."/>
            <person name="Helbig A.O."/>
            <person name="Slijper M."/>
            <person name="Krijgsveld J."/>
            <person name="Heck A.J."/>
            <person name="Mohammed S."/>
        </authorList>
    </citation>
    <scope>IDENTIFICATION BY MASS SPECTROMETRY [LARGE SCALE ANALYSIS]</scope>
</reference>
<reference key="5">
    <citation type="journal article" date="2011" name="BMC Syst. Biol.">
        <title>Initial characterization of the human central proteome.</title>
        <authorList>
            <person name="Burkard T.R."/>
            <person name="Planyavsky M."/>
            <person name="Kaupe I."/>
            <person name="Breitwieser F.P."/>
            <person name="Buerckstuemmer T."/>
            <person name="Bennett K.L."/>
            <person name="Superti-Furga G."/>
            <person name="Colinge J."/>
        </authorList>
    </citation>
    <scope>IDENTIFICATION BY MASS SPECTROMETRY [LARGE SCALE ANALYSIS]</scope>
</reference>
<reference key="6">
    <citation type="journal article" date="2012" name="Mol. Cell. Proteomics">
        <title>Systematic analysis of protein pools, isoforms, and modifications affecting turnover and subcellular localization.</title>
        <authorList>
            <person name="Ahmad Y."/>
            <person name="Boisvert F.M."/>
            <person name="Lundberg E."/>
            <person name="Uhlen M."/>
            <person name="Lamond A.I."/>
        </authorList>
    </citation>
    <scope>SUBCELLULAR LOCATION [LARGE SCALE ANALYSIS]</scope>
</reference>
<reference key="7">
    <citation type="journal article" date="2013" name="J. Proteome Res.">
        <title>Toward a comprehensive characterization of a human cancer cell phosphoproteome.</title>
        <authorList>
            <person name="Zhou H."/>
            <person name="Di Palma S."/>
            <person name="Preisinger C."/>
            <person name="Peng M."/>
            <person name="Polat A.N."/>
            <person name="Heck A.J."/>
            <person name="Mohammed S."/>
        </authorList>
    </citation>
    <scope>PHOSPHORYLATION [LARGE SCALE ANALYSIS] AT SER-10</scope>
    <scope>IDENTIFICATION BY MASS SPECTROMETRY [LARGE SCALE ANALYSIS]</scope>
    <source>
        <tissue>Cervix carcinoma</tissue>
        <tissue>Erythroleukemia</tissue>
    </source>
</reference>
<reference key="8">
    <citation type="journal article" date="2014" name="BMC Gastroenterol.">
        <title>MiR-195 affects cell migration and cell proliferation by down-regulating DIEXF in Hirschsprung's disease.</title>
        <authorList>
            <person name="Lei H."/>
            <person name="Tang J."/>
            <person name="Li H."/>
            <person name="Zhang H."/>
            <person name="Lu C."/>
            <person name="Chen H."/>
            <person name="Li W."/>
            <person name="Xia Y."/>
            <person name="Tang W."/>
        </authorList>
    </citation>
    <scope>FUNCTION</scope>
    <scope>TISSUE SPECIFICITY</scope>
    <scope>INDUCTION BY MIR195</scope>
</reference>
<reference key="9">
    <citation type="journal article" date="2016" name="PLoS Biol.">
        <title>Phosphorylation of Def Regulates Nucleolar p53 Turnover and Cell Cycle Progression through Def Recruitment of Calpain3.</title>
        <authorList>
            <person name="Guan Y."/>
            <person name="Huang D."/>
            <person name="Chen F."/>
            <person name="Gao C."/>
            <person name="Tao T."/>
            <person name="Shi H."/>
            <person name="Zhao S."/>
            <person name="Liao Z."/>
            <person name="Lo L.J."/>
            <person name="Wang Y."/>
            <person name="Chen J."/>
            <person name="Peng J."/>
        </authorList>
    </citation>
    <scope>FUNCTION</scope>
    <scope>INTERACTION WITH CAPN3</scope>
    <scope>PHOSPHORYLATION AT SER-50; SER-58 AND SER-62</scope>
</reference>
<reference key="10">
    <citation type="journal article" date="2013" name="Cell Res.">
        <title>Def defines a conserved nucleolar pathway that leads p53 to proteasome-independent degradation.</title>
        <authorList>
            <person name="Tao T."/>
            <person name="Shi H."/>
            <person name="Guan Y."/>
            <person name="Huang D."/>
            <person name="Chen Y."/>
            <person name="Lane D.P."/>
            <person name="Chen J."/>
            <person name="Peng J."/>
        </authorList>
    </citation>
    <scope>VARIANTS GLU-67 AND ASP-111</scope>
    <scope>CHARACTERIZATION OF VARIANTS GLU-67 AND ASP-111</scope>
    <scope>FUNCTION</scope>
    <scope>SUBCELLULAR LOCATION</scope>
    <scope>INTERACTION WITH CAPN3</scope>
</reference>
<name>UTP25_HUMAN</name>
<sequence length="756" mass="87055">MGKRGSRSQSQLLNTLTKKQKKHLRDFGEEHPFYDRVSRKEAKPQICQLSESSDSSDSESDSESEPQQVSGYHRLLATLKNVSEEEEEDEEEEEEEDSIVDDAEMNDEDGGSDVSVEEEMAAESTESPENVALSADPEGKEDGEEPPGTSQTSPEEFTDAKHESLFSLETNFLEEESGDNSSLKASQDPFLQHVNKELKEKAIQAVATNPKTTHELKWPILGQLFFSSKFQKLETFKPPKDIDLKSLHLQKPLESTWTKTNSQFLSGPQKSSSPFTPLQKELFLIMNSYRDLFYPERTALKNGEEIRHVYCLHVINHILKANAQVLGNNSRRRSQKFGVGDDDDFRDQGLTRPKVLIVVPFREAALRVVQLFISLLEGDSKKKIIVSNKKRFQGEYGSDPEERPPNLKRPEDYEAVFVGNIDDHFRIGVAILQRSIRLYAPFYSSDILIASPLGLRTIIGGEGEKKRDFDFLSSIELLIIDQADIYLMQNWEHVLHLMNHMNLLPLDSHGVDFSRVRMWSLNNWSKYYRQTLLFGALQDAQINSVFNKYCVNMQGQVAVRNVPMTGSISHVLVQLPHVFQRMEAENLASVIDARFNFFVNKILPQYRDAVMSHTLIYIPSYFDFVRLRNYFKKEELNFTHICEYTQKSGVSRARHFFLQGEKQFLLFTERFHFYKRYTIKGIRNLIFYELPTYPHFYSEICNMLRATNRGEEATWTCTVLYSKYDAQRLAAVVGVERAAQMLQSNKNVHLFITGEK</sequence>
<comment type="function">
    <text evidence="1 5 6 7">Component of the ribosomal small subunit processome for the biogenesis of ribosomes, functions in pre-ribosomal RNA (pre-rRNA) processing (By similarity). Essential for embryonic development in part through the regulation of p53 pathway. Controls the expansion growth of digestive organs and liver (PubMed:23357851, PubMed:25007945, PubMed:27657329). Also involved in the sympathetic neuronal development (By similarity). Mediates, with CAPN3, the proteasome-independent degradation of p53/TP53 (PubMed:23357851, PubMed:27657329).</text>
</comment>
<comment type="subunit">
    <text evidence="5 7">Interacts with CAPN3; the interaction is required for CAPN3 translocation to the nucleolus.</text>
</comment>
<comment type="interaction">
    <interactant intactId="EBI-747711">
        <id>Q68CQ4</id>
    </interactant>
    <interactant intactId="EBI-297683">
        <id>Q96CW1</id>
        <label>AP2M1</label>
    </interactant>
    <organismsDiffer>false</organismsDiffer>
    <experiments>7</experiments>
</comment>
<comment type="interaction">
    <interactant intactId="EBI-747711">
        <id>Q68CQ4</id>
    </interactant>
    <interactant intactId="EBI-739624">
        <id>Q8NHQ1</id>
        <label>CEP70</label>
    </interactant>
    <organismsDiffer>false</organismsDiffer>
    <experiments>8</experiments>
</comment>
<comment type="interaction">
    <interactant intactId="EBI-747711">
        <id>Q68CQ4</id>
    </interactant>
    <interactant intactId="EBI-10178634">
        <id>P43364-2</id>
        <label>MAGEA11</label>
    </interactant>
    <organismsDiffer>false</organismsDiffer>
    <experiments>3</experiments>
</comment>
<comment type="interaction">
    <interactant intactId="EBI-747711">
        <id>Q68CQ4</id>
    </interactant>
    <interactant intactId="EBI-16439278">
        <id>Q6FHY5</id>
        <label>MEOX2</label>
    </interactant>
    <organismsDiffer>false</organismsDiffer>
    <experiments>3</experiments>
</comment>
<comment type="interaction">
    <interactant intactId="EBI-747711">
        <id>Q68CQ4</id>
    </interactant>
    <interactant intactId="EBI-10172526">
        <id>Q9UJV3-2</id>
        <label>MID2</label>
    </interactant>
    <organismsDiffer>false</organismsDiffer>
    <experiments>3</experiments>
</comment>
<comment type="interaction">
    <interactant intactId="EBI-747711">
        <id>Q68CQ4</id>
    </interactant>
    <interactant intactId="EBI-2548751">
        <id>Q8TD10</id>
        <label>MIPOL1</label>
    </interactant>
    <organismsDiffer>false</organismsDiffer>
    <experiments>4</experiments>
</comment>
<comment type="interaction">
    <interactant intactId="EBI-747711">
        <id>Q68CQ4</id>
    </interactant>
    <interactant intactId="EBI-3941207">
        <id>Q96T51</id>
        <label>RUFY1</label>
    </interactant>
    <organismsDiffer>false</organismsDiffer>
    <experiments>5</experiments>
</comment>
<comment type="interaction">
    <interactant intactId="EBI-747711">
        <id>Q68CQ4</id>
    </interactant>
    <interactant intactId="EBI-12192715">
        <id>Q96T51-2</id>
        <label>RUFY1</label>
    </interactant>
    <organismsDiffer>false</organismsDiffer>
    <experiments>6</experiments>
</comment>
<comment type="interaction">
    <interactant intactId="EBI-747711">
        <id>Q68CQ4</id>
    </interactant>
    <interactant intactId="EBI-6929619">
        <id>Q9BVG3</id>
        <label>TRIM62</label>
    </interactant>
    <organismsDiffer>false</organismsDiffer>
    <experiments>3</experiments>
</comment>
<comment type="interaction">
    <interactant intactId="EBI-747711">
        <id>Q68CQ4</id>
    </interactant>
    <interactant intactId="EBI-720828">
        <id>Q9C026</id>
        <label>TRIM9</label>
    </interactant>
    <organismsDiffer>false</organismsDiffer>
    <experiments>3</experiments>
</comment>
<comment type="interaction">
    <interactant intactId="EBI-747711">
        <id>Q68CQ4</id>
    </interactant>
    <interactant intactId="EBI-12017160">
        <id>Q96DT7-3</id>
        <label>ZBTB10</label>
    </interactant>
    <organismsDiffer>false</organismsDiffer>
    <experiments>3</experiments>
</comment>
<comment type="subcellular location">
    <subcellularLocation>
        <location evidence="4 7">Nucleus</location>
        <location evidence="4 7">Nucleolus</location>
    </subcellularLocation>
</comment>
<comment type="tissue specificity">
    <text evidence="6">Expressed in colon.</text>
</comment>
<comment type="induction">
    <text evidence="6">Down-regulated by the miRNA MIR195.</text>
</comment>
<comment type="PTM">
    <text evidence="7">Phosphorylated. Phosphorylation is required to promote p53/TP53 degradation in the nucleolus which promotes cell cycle progression and liver development.</text>
</comment>
<comment type="similarity">
    <text evidence="10">Belongs to the UTP25 family.</text>
</comment>
<organism>
    <name type="scientific">Homo sapiens</name>
    <name type="common">Human</name>
    <dbReference type="NCBI Taxonomy" id="9606"/>
    <lineage>
        <taxon>Eukaryota</taxon>
        <taxon>Metazoa</taxon>
        <taxon>Chordata</taxon>
        <taxon>Craniata</taxon>
        <taxon>Vertebrata</taxon>
        <taxon>Euteleostomi</taxon>
        <taxon>Mammalia</taxon>
        <taxon>Eutheria</taxon>
        <taxon>Euarchontoglires</taxon>
        <taxon>Primates</taxon>
        <taxon>Haplorrhini</taxon>
        <taxon>Catarrhini</taxon>
        <taxon>Hominidae</taxon>
        <taxon>Homo</taxon>
    </lineage>
</organism>